<protein>
    <recommendedName>
        <fullName>Uncharacterized protein RP502</fullName>
    </recommendedName>
</protein>
<reference key="1">
    <citation type="journal article" date="1998" name="Nature">
        <title>The genome sequence of Rickettsia prowazekii and the origin of mitochondria.</title>
        <authorList>
            <person name="Andersson S.G.E."/>
            <person name="Zomorodipour A."/>
            <person name="Andersson J.O."/>
            <person name="Sicheritz-Ponten T."/>
            <person name="Alsmark U.C.M."/>
            <person name="Podowski R.M."/>
            <person name="Naeslund A.K."/>
            <person name="Eriksson A.-S."/>
            <person name="Winkler H.H."/>
            <person name="Kurland C.G."/>
        </authorList>
    </citation>
    <scope>NUCLEOTIDE SEQUENCE [LARGE SCALE GENOMIC DNA]</scope>
    <source>
        <strain>Madrid E</strain>
    </source>
</reference>
<proteinExistence type="predicted"/>
<sequence>MLKRTYIRTLTEDLALSLQSLGFVLELRRTQVGIFKAENAIKIKSSDEITKNFIEKKSIKIEAILDDILVLDATDDQAQRIKYGQKCVFDYEEDVSFLWVRYNGTLLAIGSLNKSCFNSLRVFNLL</sequence>
<accession>Q9ZD45</accession>
<gene>
    <name type="ordered locus">RP502</name>
</gene>
<organism>
    <name type="scientific">Rickettsia prowazekii (strain Madrid E)</name>
    <dbReference type="NCBI Taxonomy" id="272947"/>
    <lineage>
        <taxon>Bacteria</taxon>
        <taxon>Pseudomonadati</taxon>
        <taxon>Pseudomonadota</taxon>
        <taxon>Alphaproteobacteria</taxon>
        <taxon>Rickettsiales</taxon>
        <taxon>Rickettsiaceae</taxon>
        <taxon>Rickettsieae</taxon>
        <taxon>Rickettsia</taxon>
        <taxon>typhus group</taxon>
    </lineage>
</organism>
<name>Y502_RICPR</name>
<keyword id="KW-1185">Reference proteome</keyword>
<feature type="chain" id="PRO_0000101382" description="Uncharacterized protein RP502">
    <location>
        <begin position="1"/>
        <end position="126"/>
    </location>
</feature>
<dbReference type="EMBL" id="AJ235272">
    <property type="protein sequence ID" value="CAA14954.1"/>
    <property type="molecule type" value="Genomic_DNA"/>
</dbReference>
<dbReference type="PIR" id="H71653">
    <property type="entry name" value="H71653"/>
</dbReference>
<dbReference type="SMR" id="Q9ZD45"/>
<dbReference type="STRING" id="272947.gene:17555582"/>
<dbReference type="EnsemblBacteria" id="CAA14954">
    <property type="protein sequence ID" value="CAA14954"/>
    <property type="gene ID" value="CAA14954"/>
</dbReference>
<dbReference type="KEGG" id="rpr:RP502"/>
<dbReference type="HOGENOM" id="CLU_1979886_0_0_5"/>
<dbReference type="Proteomes" id="UP000002480">
    <property type="component" value="Chromosome"/>
</dbReference>
<dbReference type="GO" id="GO:0140098">
    <property type="term" value="F:catalytic activity, acting on RNA"/>
    <property type="evidence" value="ECO:0007669"/>
    <property type="project" value="UniProtKB-ARBA"/>
</dbReference>
<dbReference type="GO" id="GO:0009982">
    <property type="term" value="F:pseudouridine synthase activity"/>
    <property type="evidence" value="ECO:0007669"/>
    <property type="project" value="InterPro"/>
</dbReference>
<dbReference type="GO" id="GO:0003723">
    <property type="term" value="F:RNA binding"/>
    <property type="evidence" value="ECO:0007669"/>
    <property type="project" value="InterPro"/>
</dbReference>
<dbReference type="GO" id="GO:0001522">
    <property type="term" value="P:pseudouridine synthesis"/>
    <property type="evidence" value="ECO:0007669"/>
    <property type="project" value="InterPro"/>
</dbReference>
<dbReference type="GO" id="GO:0006396">
    <property type="term" value="P:RNA processing"/>
    <property type="evidence" value="ECO:0007669"/>
    <property type="project" value="UniProtKB-ARBA"/>
</dbReference>
<dbReference type="Gene3D" id="3.30.2350.10">
    <property type="entry name" value="Pseudouridine synthase"/>
    <property type="match status" value="1"/>
</dbReference>
<dbReference type="InterPro" id="IPR020103">
    <property type="entry name" value="PsdUridine_synth_cat_dom_sf"/>
</dbReference>
<dbReference type="InterPro" id="IPR032819">
    <property type="entry name" value="TruB_C"/>
</dbReference>
<dbReference type="Pfam" id="PF16198">
    <property type="entry name" value="TruB_C_2"/>
    <property type="match status" value="1"/>
</dbReference>
<dbReference type="SUPFAM" id="SSF55120">
    <property type="entry name" value="Pseudouridine synthase"/>
    <property type="match status" value="1"/>
</dbReference>